<reference key="1">
    <citation type="journal article" date="2006" name="Genome Biol.">
        <title>Genomic analysis reveals that Pseudomonas aeruginosa virulence is combinatorial.</title>
        <authorList>
            <person name="Lee D.G."/>
            <person name="Urbach J.M."/>
            <person name="Wu G."/>
            <person name="Liberati N.T."/>
            <person name="Feinbaum R.L."/>
            <person name="Miyata S."/>
            <person name="Diggins L.T."/>
            <person name="He J."/>
            <person name="Saucier M."/>
            <person name="Deziel E."/>
            <person name="Friedman L."/>
            <person name="Li L."/>
            <person name="Grills G."/>
            <person name="Montgomery K."/>
            <person name="Kucherlapati R."/>
            <person name="Rahme L.G."/>
            <person name="Ausubel F.M."/>
        </authorList>
    </citation>
    <scope>NUCLEOTIDE SEQUENCE [LARGE SCALE GENOMIC DNA]</scope>
    <source>
        <strain>UCBPP-PA14</strain>
    </source>
</reference>
<gene>
    <name evidence="1" type="primary">infA</name>
    <name type="ordered locus">PA14_30240</name>
</gene>
<evidence type="ECO:0000255" key="1">
    <source>
        <dbReference type="HAMAP-Rule" id="MF_00075"/>
    </source>
</evidence>
<protein>
    <recommendedName>
        <fullName evidence="1">Translation initiation factor IF-1</fullName>
    </recommendedName>
</protein>
<feature type="chain" id="PRO_0000338888" description="Translation initiation factor IF-1">
    <location>
        <begin position="1"/>
        <end position="72"/>
    </location>
</feature>
<feature type="domain" description="S1-like" evidence="1">
    <location>
        <begin position="1"/>
        <end position="72"/>
    </location>
</feature>
<organism>
    <name type="scientific">Pseudomonas aeruginosa (strain UCBPP-PA14)</name>
    <dbReference type="NCBI Taxonomy" id="208963"/>
    <lineage>
        <taxon>Bacteria</taxon>
        <taxon>Pseudomonadati</taxon>
        <taxon>Pseudomonadota</taxon>
        <taxon>Gammaproteobacteria</taxon>
        <taxon>Pseudomonadales</taxon>
        <taxon>Pseudomonadaceae</taxon>
        <taxon>Pseudomonas</taxon>
    </lineage>
</organism>
<keyword id="KW-0963">Cytoplasm</keyword>
<keyword id="KW-0396">Initiation factor</keyword>
<keyword id="KW-0648">Protein biosynthesis</keyword>
<keyword id="KW-0694">RNA-binding</keyword>
<keyword id="KW-0699">rRNA-binding</keyword>
<accession>Q02NB1</accession>
<name>IF1_PSEAB</name>
<sequence>MSKEDSFEMEGTVVDTLPNTMFRVELENGHVVTAHISGKMRKNYIRILTGDKVRVELTPYDLSKGRITYRAR</sequence>
<proteinExistence type="inferred from homology"/>
<comment type="function">
    <text evidence="1">One of the essential components for the initiation of protein synthesis. Stabilizes the binding of IF-2 and IF-3 on the 30S subunit to which N-formylmethionyl-tRNA(fMet) subsequently binds. Helps modulate mRNA selection, yielding the 30S pre-initiation complex (PIC). Upon addition of the 50S ribosomal subunit IF-1, IF-2 and IF-3 are released leaving the mature 70S translation initiation complex.</text>
</comment>
<comment type="subunit">
    <text evidence="1">Component of the 30S ribosomal translation pre-initiation complex which assembles on the 30S ribosome in the order IF-2 and IF-3, IF-1 and N-formylmethionyl-tRNA(fMet); mRNA recruitment can occur at any time during PIC assembly.</text>
</comment>
<comment type="subcellular location">
    <subcellularLocation>
        <location evidence="1">Cytoplasm</location>
    </subcellularLocation>
</comment>
<comment type="similarity">
    <text evidence="1">Belongs to the IF-1 family.</text>
</comment>
<dbReference type="EMBL" id="CP000438">
    <property type="protein sequence ID" value="ABJ11842.1"/>
    <property type="molecule type" value="Genomic_DNA"/>
</dbReference>
<dbReference type="RefSeq" id="WP_002553999.1">
    <property type="nucleotide sequence ID" value="NZ_CP034244.1"/>
</dbReference>
<dbReference type="SMR" id="Q02NB1"/>
<dbReference type="GeneID" id="98638452"/>
<dbReference type="KEGG" id="pau:PA14_30240"/>
<dbReference type="PseudoCAP" id="PA14_30240"/>
<dbReference type="HOGENOM" id="CLU_151267_1_0_6"/>
<dbReference type="BioCyc" id="PAER208963:G1G74-2532-MONOMER"/>
<dbReference type="Proteomes" id="UP000000653">
    <property type="component" value="Chromosome"/>
</dbReference>
<dbReference type="GO" id="GO:0005829">
    <property type="term" value="C:cytosol"/>
    <property type="evidence" value="ECO:0007669"/>
    <property type="project" value="TreeGrafter"/>
</dbReference>
<dbReference type="GO" id="GO:0043022">
    <property type="term" value="F:ribosome binding"/>
    <property type="evidence" value="ECO:0007669"/>
    <property type="project" value="UniProtKB-UniRule"/>
</dbReference>
<dbReference type="GO" id="GO:0019843">
    <property type="term" value="F:rRNA binding"/>
    <property type="evidence" value="ECO:0007669"/>
    <property type="project" value="UniProtKB-UniRule"/>
</dbReference>
<dbReference type="GO" id="GO:0003743">
    <property type="term" value="F:translation initiation factor activity"/>
    <property type="evidence" value="ECO:0007669"/>
    <property type="project" value="UniProtKB-UniRule"/>
</dbReference>
<dbReference type="CDD" id="cd04451">
    <property type="entry name" value="S1_IF1"/>
    <property type="match status" value="1"/>
</dbReference>
<dbReference type="FunFam" id="2.40.50.140:FF:000002">
    <property type="entry name" value="Translation initiation factor IF-1"/>
    <property type="match status" value="1"/>
</dbReference>
<dbReference type="Gene3D" id="2.40.50.140">
    <property type="entry name" value="Nucleic acid-binding proteins"/>
    <property type="match status" value="1"/>
</dbReference>
<dbReference type="HAMAP" id="MF_00075">
    <property type="entry name" value="IF_1"/>
    <property type="match status" value="1"/>
</dbReference>
<dbReference type="InterPro" id="IPR012340">
    <property type="entry name" value="NA-bd_OB-fold"/>
</dbReference>
<dbReference type="InterPro" id="IPR006196">
    <property type="entry name" value="RNA-binding_domain_S1_IF1"/>
</dbReference>
<dbReference type="InterPro" id="IPR003029">
    <property type="entry name" value="S1_domain"/>
</dbReference>
<dbReference type="InterPro" id="IPR004368">
    <property type="entry name" value="TIF_IF1"/>
</dbReference>
<dbReference type="NCBIfam" id="TIGR00008">
    <property type="entry name" value="infA"/>
    <property type="match status" value="1"/>
</dbReference>
<dbReference type="PANTHER" id="PTHR33370">
    <property type="entry name" value="TRANSLATION INITIATION FACTOR IF-1, CHLOROPLASTIC"/>
    <property type="match status" value="1"/>
</dbReference>
<dbReference type="PANTHER" id="PTHR33370:SF1">
    <property type="entry name" value="TRANSLATION INITIATION FACTOR IF-1, CHLOROPLASTIC"/>
    <property type="match status" value="1"/>
</dbReference>
<dbReference type="Pfam" id="PF01176">
    <property type="entry name" value="eIF-1a"/>
    <property type="match status" value="1"/>
</dbReference>
<dbReference type="SMART" id="SM00316">
    <property type="entry name" value="S1"/>
    <property type="match status" value="1"/>
</dbReference>
<dbReference type="SUPFAM" id="SSF50249">
    <property type="entry name" value="Nucleic acid-binding proteins"/>
    <property type="match status" value="1"/>
</dbReference>
<dbReference type="PROSITE" id="PS50832">
    <property type="entry name" value="S1_IF1_TYPE"/>
    <property type="match status" value="1"/>
</dbReference>